<name>LIMK2_MOUSE</name>
<gene>
    <name type="primary">Limk2</name>
</gene>
<feature type="chain" id="PRO_0000075810" description="LIM domain kinase 2">
    <location>
        <begin position="1"/>
        <end position="638"/>
    </location>
</feature>
<feature type="domain" description="LIM zinc-binding 1" evidence="2">
    <location>
        <begin position="12"/>
        <end position="63"/>
    </location>
</feature>
<feature type="domain" description="LIM zinc-binding 2" evidence="2">
    <location>
        <begin position="72"/>
        <end position="124"/>
    </location>
</feature>
<feature type="domain" description="PDZ" evidence="3">
    <location>
        <begin position="152"/>
        <end position="239"/>
    </location>
</feature>
<feature type="domain" description="Protein kinase" evidence="4">
    <location>
        <begin position="331"/>
        <end position="608"/>
    </location>
</feature>
<feature type="region of interest" description="Disordered" evidence="5">
    <location>
        <begin position="255"/>
        <end position="304"/>
    </location>
</feature>
<feature type="compositionally biased region" description="Polar residues" evidence="5">
    <location>
        <begin position="257"/>
        <end position="269"/>
    </location>
</feature>
<feature type="compositionally biased region" description="Basic and acidic residues" evidence="5">
    <location>
        <begin position="270"/>
        <end position="279"/>
    </location>
</feature>
<feature type="compositionally biased region" description="Low complexity" evidence="5">
    <location>
        <begin position="286"/>
        <end position="304"/>
    </location>
</feature>
<feature type="active site" evidence="1">
    <location>
        <position position="451"/>
    </location>
</feature>
<feature type="binding site" evidence="4">
    <location>
        <begin position="337"/>
        <end position="345"/>
    </location>
    <ligand>
        <name>ATP</name>
        <dbReference type="ChEBI" id="CHEBI:30616"/>
    </ligand>
</feature>
<feature type="binding site" evidence="4">
    <location>
        <position position="360"/>
    </location>
    <ligand>
        <name>ATP</name>
        <dbReference type="ChEBI" id="CHEBI:30616"/>
    </ligand>
</feature>
<feature type="modified residue" description="Phosphothreonine" evidence="1">
    <location>
        <position position="210"/>
    </location>
</feature>
<feature type="modified residue" description="Phosphoserine" evidence="1">
    <location>
        <position position="293"/>
    </location>
</feature>
<feature type="modified residue" description="Phosphoserine" evidence="1">
    <location>
        <position position="298"/>
    </location>
</feature>
<feature type="modified residue" description="Phosphothreonine; by ROCK1 and CDC42BP" evidence="1">
    <location>
        <position position="505"/>
    </location>
</feature>
<feature type="splice variant" id="VSP_010351" description="In isoform 3." evidence="9 10">
    <location>
        <begin position="1"/>
        <end position="187"/>
    </location>
</feature>
<feature type="splice variant" id="VSP_010350" description="In isoform LIMK2b." evidence="8">
    <original>MAALAGDEAWRCRGCGTYVPLSQRLYRTANEAWHGSC</original>
    <variation>MGSYLSVPAYFTSRDP</variation>
    <location>
        <begin position="1"/>
        <end position="37"/>
    </location>
</feature>
<feature type="strand" evidence="12">
    <location>
        <begin position="149"/>
        <end position="155"/>
    </location>
</feature>
<feature type="strand" evidence="12">
    <location>
        <begin position="159"/>
        <end position="162"/>
    </location>
</feature>
<feature type="strand" evidence="12">
    <location>
        <begin position="164"/>
        <end position="170"/>
    </location>
</feature>
<feature type="strand" evidence="12">
    <location>
        <begin position="174"/>
        <end position="176"/>
    </location>
</feature>
<feature type="strand" evidence="12">
    <location>
        <begin position="179"/>
        <end position="184"/>
    </location>
</feature>
<feature type="turn" evidence="12">
    <location>
        <begin position="187"/>
        <end position="189"/>
    </location>
</feature>
<feature type="helix" evidence="12">
    <location>
        <begin position="194"/>
        <end position="197"/>
    </location>
</feature>
<feature type="strand" evidence="12">
    <location>
        <begin position="204"/>
        <end position="211"/>
    </location>
</feature>
<feature type="turn" evidence="12">
    <location>
        <begin position="212"/>
        <end position="214"/>
    </location>
</feature>
<feature type="helix" evidence="12">
    <location>
        <begin position="217"/>
        <end position="225"/>
    </location>
</feature>
<feature type="strand" evidence="12">
    <location>
        <begin position="231"/>
        <end position="237"/>
    </location>
</feature>
<proteinExistence type="evidence at protein level"/>
<evidence type="ECO:0000250" key="1">
    <source>
        <dbReference type="UniProtKB" id="P53671"/>
    </source>
</evidence>
<evidence type="ECO:0000255" key="2">
    <source>
        <dbReference type="PROSITE-ProRule" id="PRU00125"/>
    </source>
</evidence>
<evidence type="ECO:0000255" key="3">
    <source>
        <dbReference type="PROSITE-ProRule" id="PRU00143"/>
    </source>
</evidence>
<evidence type="ECO:0000255" key="4">
    <source>
        <dbReference type="PROSITE-ProRule" id="PRU00159"/>
    </source>
</evidence>
<evidence type="ECO:0000256" key="5">
    <source>
        <dbReference type="SAM" id="MobiDB-lite"/>
    </source>
</evidence>
<evidence type="ECO:0000269" key="6">
    <source>
    </source>
</evidence>
<evidence type="ECO:0000269" key="7">
    <source>
    </source>
</evidence>
<evidence type="ECO:0000303" key="8">
    <source>
    </source>
</evidence>
<evidence type="ECO:0000303" key="9">
    <source>
    </source>
</evidence>
<evidence type="ECO:0000303" key="10">
    <source>
    </source>
</evidence>
<evidence type="ECO:0000305" key="11"/>
<evidence type="ECO:0007829" key="12">
    <source>
        <dbReference type="PDB" id="2YUB"/>
    </source>
</evidence>
<accession>O54785</accession>
<accession>O54776</accession>
<accession>O55238</accession>
<accession>Q9QUL4</accession>
<protein>
    <recommendedName>
        <fullName>LIM domain kinase 2</fullName>
        <shortName>LIMK-2</shortName>
        <ecNumber evidence="1">2.7.11.1</ecNumber>
    </recommendedName>
</protein>
<dbReference type="EC" id="2.7.11.1" evidence="1"/>
<dbReference type="EMBL" id="AB008117">
    <property type="protein sequence ID" value="BAA29035.1"/>
    <property type="molecule type" value="mRNA"/>
</dbReference>
<dbReference type="EMBL" id="AB005140">
    <property type="protein sequence ID" value="BAA24491.1"/>
    <property type="molecule type" value="Genomic_DNA"/>
</dbReference>
<dbReference type="EMBL" id="AB005131">
    <property type="protein sequence ID" value="BAA24488.1"/>
    <property type="molecule type" value="mRNA"/>
</dbReference>
<dbReference type="EMBL" id="AB005132">
    <property type="protein sequence ID" value="BAA24489.1"/>
    <property type="molecule type" value="mRNA"/>
</dbReference>
<dbReference type="EMBL" id="AB005134">
    <property type="protein sequence ID" value="BAA24490.1"/>
    <property type="molecule type" value="Genomic_DNA"/>
</dbReference>
<dbReference type="EMBL" id="U88618">
    <property type="protein sequence ID" value="AAC39947.1"/>
    <property type="molecule type" value="mRNA"/>
</dbReference>
<dbReference type="EMBL" id="AB012291">
    <property type="protein sequence ID" value="BAA32437.1"/>
    <property type="molecule type" value="mRNA"/>
</dbReference>
<dbReference type="EMBL" id="AB012092">
    <property type="protein sequence ID" value="BAA31147.1"/>
    <property type="molecule type" value="mRNA"/>
</dbReference>
<dbReference type="EMBL" id="BC007129">
    <property type="protein sequence ID" value="AAH07129.1"/>
    <property type="molecule type" value="mRNA"/>
</dbReference>
<dbReference type="CCDS" id="CCDS24358.1">
    <molecule id="O54785-1"/>
</dbReference>
<dbReference type="CCDS" id="CCDS24359.1">
    <molecule id="O54785-2"/>
</dbReference>
<dbReference type="CCDS" id="CCDS24360.1">
    <molecule id="O54785-3"/>
</dbReference>
<dbReference type="PIR" id="JC5813">
    <property type="entry name" value="JC5813"/>
</dbReference>
<dbReference type="PIR" id="JC5814">
    <property type="entry name" value="JC5814"/>
</dbReference>
<dbReference type="PIR" id="JE0240">
    <property type="entry name" value="JE0240"/>
</dbReference>
<dbReference type="RefSeq" id="NP_001029202.1">
    <molecule id="O54785-3"/>
    <property type="nucleotide sequence ID" value="NM_001034030.2"/>
</dbReference>
<dbReference type="RefSeq" id="NP_001389793.1">
    <molecule id="O54785-3"/>
    <property type="nucleotide sequence ID" value="NM_001402864.1"/>
</dbReference>
<dbReference type="RefSeq" id="NP_034848.1">
    <molecule id="O54785-1"/>
    <property type="nucleotide sequence ID" value="NM_010718.4"/>
</dbReference>
<dbReference type="RefSeq" id="NP_774958.1">
    <molecule id="O54785-2"/>
    <property type="nucleotide sequence ID" value="NM_173053.2"/>
</dbReference>
<dbReference type="PDB" id="2YUB">
    <property type="method" value="NMR"/>
    <property type="chains" value="A=142-246"/>
</dbReference>
<dbReference type="PDBsum" id="2YUB"/>
<dbReference type="BMRB" id="O54785"/>
<dbReference type="SMR" id="O54785"/>
<dbReference type="BioGRID" id="201167">
    <property type="interactions" value="2"/>
</dbReference>
<dbReference type="FunCoup" id="O54785">
    <property type="interactions" value="2497"/>
</dbReference>
<dbReference type="STRING" id="10090.ENSMUSP00000099162"/>
<dbReference type="iPTMnet" id="O54785"/>
<dbReference type="PhosphoSitePlus" id="O54785"/>
<dbReference type="SwissPalm" id="O54785"/>
<dbReference type="jPOST" id="O54785"/>
<dbReference type="PaxDb" id="10090-ENSMUSP00000099162"/>
<dbReference type="PeptideAtlas" id="O54785"/>
<dbReference type="ProteomicsDB" id="286201">
    <molecule id="O54785-1"/>
</dbReference>
<dbReference type="ProteomicsDB" id="286202">
    <molecule id="O54785-2"/>
</dbReference>
<dbReference type="ProteomicsDB" id="286203">
    <molecule id="O54785-3"/>
</dbReference>
<dbReference type="Pumba" id="O54785"/>
<dbReference type="Antibodypedia" id="2106">
    <property type="antibodies" value="595 antibodies from 38 providers"/>
</dbReference>
<dbReference type="DNASU" id="16886"/>
<dbReference type="Ensembl" id="ENSMUST00000101638.4">
    <molecule id="O54785-1"/>
    <property type="protein sequence ID" value="ENSMUSP00000099162.4"/>
    <property type="gene ID" value="ENSMUSG00000020451.18"/>
</dbReference>
<dbReference type="Ensembl" id="ENSMUST00000101642.10">
    <molecule id="O54785-2"/>
    <property type="protein sequence ID" value="ENSMUSP00000099165.4"/>
    <property type="gene ID" value="ENSMUSG00000020451.18"/>
</dbReference>
<dbReference type="Ensembl" id="ENSMUST00000110029.9">
    <molecule id="O54785-3"/>
    <property type="protein sequence ID" value="ENSMUSP00000105656.3"/>
    <property type="gene ID" value="ENSMUSG00000020451.18"/>
</dbReference>
<dbReference type="GeneID" id="16886"/>
<dbReference type="KEGG" id="mmu:16886"/>
<dbReference type="UCSC" id="uc007hss.1">
    <molecule id="O54785-1"/>
    <property type="organism name" value="mouse"/>
</dbReference>
<dbReference type="UCSC" id="uc007hst.1">
    <molecule id="O54785-2"/>
    <property type="organism name" value="mouse"/>
</dbReference>
<dbReference type="AGR" id="MGI:1197517"/>
<dbReference type="CTD" id="3985"/>
<dbReference type="MGI" id="MGI:1197517">
    <property type="gene designation" value="Limk2"/>
</dbReference>
<dbReference type="VEuPathDB" id="HostDB:ENSMUSG00000020451"/>
<dbReference type="eggNOG" id="KOG1187">
    <property type="taxonomic scope" value="Eukaryota"/>
</dbReference>
<dbReference type="GeneTree" id="ENSGT00940000159133"/>
<dbReference type="HOGENOM" id="CLU_000288_7_23_1"/>
<dbReference type="InParanoid" id="O54785"/>
<dbReference type="OMA" id="EPENNCY"/>
<dbReference type="OrthoDB" id="20134at2759"/>
<dbReference type="PhylomeDB" id="O54785"/>
<dbReference type="TreeFam" id="TF318014"/>
<dbReference type="BioGRID-ORCS" id="16886">
    <property type="hits" value="4 hits in 79 CRISPR screens"/>
</dbReference>
<dbReference type="ChiTaRS" id="Limk2">
    <property type="organism name" value="mouse"/>
</dbReference>
<dbReference type="EvolutionaryTrace" id="O54785"/>
<dbReference type="PRO" id="PR:O54785"/>
<dbReference type="Proteomes" id="UP000000589">
    <property type="component" value="Chromosome 11"/>
</dbReference>
<dbReference type="RNAct" id="O54785">
    <property type="molecule type" value="protein"/>
</dbReference>
<dbReference type="Bgee" id="ENSMUSG00000020451">
    <property type="expression patterns" value="Expressed in lip and 261 other cell types or tissues"/>
</dbReference>
<dbReference type="ExpressionAtlas" id="O54785">
    <property type="expression patterns" value="baseline and differential"/>
</dbReference>
<dbReference type="GO" id="GO:0005813">
    <property type="term" value="C:centrosome"/>
    <property type="evidence" value="ECO:0000250"/>
    <property type="project" value="UniProtKB"/>
</dbReference>
<dbReference type="GO" id="GO:0005801">
    <property type="term" value="C:cis-Golgi network"/>
    <property type="evidence" value="ECO:0000314"/>
    <property type="project" value="MGI"/>
</dbReference>
<dbReference type="GO" id="GO:0005737">
    <property type="term" value="C:cytoplasm"/>
    <property type="evidence" value="ECO:0000314"/>
    <property type="project" value="MGI"/>
</dbReference>
<dbReference type="GO" id="GO:0072686">
    <property type="term" value="C:mitotic spindle"/>
    <property type="evidence" value="ECO:0000250"/>
    <property type="project" value="UniProtKB"/>
</dbReference>
<dbReference type="GO" id="GO:0005634">
    <property type="term" value="C:nucleus"/>
    <property type="evidence" value="ECO:0000314"/>
    <property type="project" value="MGI"/>
</dbReference>
<dbReference type="GO" id="GO:0048471">
    <property type="term" value="C:perinuclear region of cytoplasm"/>
    <property type="evidence" value="ECO:0007669"/>
    <property type="project" value="UniProtKB-SubCell"/>
</dbReference>
<dbReference type="GO" id="GO:0005524">
    <property type="term" value="F:ATP binding"/>
    <property type="evidence" value="ECO:0007669"/>
    <property type="project" value="UniProtKB-KW"/>
</dbReference>
<dbReference type="GO" id="GO:0046872">
    <property type="term" value="F:metal ion binding"/>
    <property type="evidence" value="ECO:0007669"/>
    <property type="project" value="UniProtKB-KW"/>
</dbReference>
<dbReference type="GO" id="GO:0004672">
    <property type="term" value="F:protein kinase activity"/>
    <property type="evidence" value="ECO:0000315"/>
    <property type="project" value="MGI"/>
</dbReference>
<dbReference type="GO" id="GO:0106310">
    <property type="term" value="F:protein serine kinase activity"/>
    <property type="evidence" value="ECO:0007669"/>
    <property type="project" value="RHEA"/>
</dbReference>
<dbReference type="GO" id="GO:0004674">
    <property type="term" value="F:protein serine/threonine kinase activity"/>
    <property type="evidence" value="ECO:0000250"/>
    <property type="project" value="UniProtKB"/>
</dbReference>
<dbReference type="GO" id="GO:0030953">
    <property type="term" value="P:astral microtubule organization"/>
    <property type="evidence" value="ECO:0000250"/>
    <property type="project" value="UniProtKB"/>
</dbReference>
<dbReference type="GO" id="GO:0061303">
    <property type="term" value="P:cornea development in camera-type eye"/>
    <property type="evidence" value="ECO:0000315"/>
    <property type="project" value="MGI"/>
</dbReference>
<dbReference type="GO" id="GO:0051650">
    <property type="term" value="P:establishment of vesicle localization"/>
    <property type="evidence" value="ECO:0000250"/>
    <property type="project" value="UniProtKB"/>
</dbReference>
<dbReference type="GO" id="GO:0060322">
    <property type="term" value="P:head development"/>
    <property type="evidence" value="ECO:0000315"/>
    <property type="project" value="MGI"/>
</dbReference>
<dbReference type="GO" id="GO:1902018">
    <property type="term" value="P:negative regulation of cilium assembly"/>
    <property type="evidence" value="ECO:0000250"/>
    <property type="project" value="UniProtKB"/>
</dbReference>
<dbReference type="GO" id="GO:1900182">
    <property type="term" value="P:positive regulation of protein localization to nucleus"/>
    <property type="evidence" value="ECO:0000250"/>
    <property type="project" value="UniProtKB"/>
</dbReference>
<dbReference type="GO" id="GO:0006468">
    <property type="term" value="P:protein phosphorylation"/>
    <property type="evidence" value="ECO:0000250"/>
    <property type="project" value="UniProtKB"/>
</dbReference>
<dbReference type="GO" id="GO:0007283">
    <property type="term" value="P:spermatogenesis"/>
    <property type="evidence" value="ECO:0000315"/>
    <property type="project" value="MGI"/>
</dbReference>
<dbReference type="CDD" id="cd09465">
    <property type="entry name" value="LIM2_LIMK2"/>
    <property type="match status" value="1"/>
</dbReference>
<dbReference type="CDD" id="cd06754">
    <property type="entry name" value="PDZ_LIMK-like"/>
    <property type="match status" value="1"/>
</dbReference>
<dbReference type="CDD" id="cd14222">
    <property type="entry name" value="STKc_LIMK2"/>
    <property type="match status" value="1"/>
</dbReference>
<dbReference type="FunFam" id="2.10.110.10:FF:000038">
    <property type="entry name" value="LIM domain kinase 2"/>
    <property type="match status" value="1"/>
</dbReference>
<dbReference type="FunFam" id="2.10.110.10:FF:000090">
    <property type="entry name" value="LIM domain kinase 2"/>
    <property type="match status" value="1"/>
</dbReference>
<dbReference type="FunFam" id="3.30.200.20:FF:000038">
    <property type="entry name" value="LIM domain kinase 2"/>
    <property type="match status" value="1"/>
</dbReference>
<dbReference type="FunFam" id="1.10.510.10:FF:000197">
    <property type="entry name" value="LIM domain kinase 2 isoform X1"/>
    <property type="match status" value="1"/>
</dbReference>
<dbReference type="FunFam" id="2.30.42.10:FF:000082">
    <property type="entry name" value="LIM domain kinase 2 isoform X2"/>
    <property type="match status" value="1"/>
</dbReference>
<dbReference type="Gene3D" id="2.30.42.10">
    <property type="match status" value="1"/>
</dbReference>
<dbReference type="Gene3D" id="2.10.110.10">
    <property type="entry name" value="Cysteine Rich Protein"/>
    <property type="match status" value="2"/>
</dbReference>
<dbReference type="Gene3D" id="3.30.200.20">
    <property type="entry name" value="Phosphorylase Kinase, domain 1"/>
    <property type="match status" value="1"/>
</dbReference>
<dbReference type="Gene3D" id="1.10.510.10">
    <property type="entry name" value="Transferase(Phosphotransferase) domain 1"/>
    <property type="match status" value="1"/>
</dbReference>
<dbReference type="InterPro" id="IPR050940">
    <property type="entry name" value="Actin_reg-Ser/Thr_kinase"/>
</dbReference>
<dbReference type="InterPro" id="IPR011009">
    <property type="entry name" value="Kinase-like_dom_sf"/>
</dbReference>
<dbReference type="InterPro" id="IPR001478">
    <property type="entry name" value="PDZ"/>
</dbReference>
<dbReference type="InterPro" id="IPR036034">
    <property type="entry name" value="PDZ_sf"/>
</dbReference>
<dbReference type="InterPro" id="IPR000719">
    <property type="entry name" value="Prot_kinase_dom"/>
</dbReference>
<dbReference type="InterPro" id="IPR017441">
    <property type="entry name" value="Protein_kinase_ATP_BS"/>
</dbReference>
<dbReference type="InterPro" id="IPR001245">
    <property type="entry name" value="Ser-Thr/Tyr_kinase_cat_dom"/>
</dbReference>
<dbReference type="InterPro" id="IPR001781">
    <property type="entry name" value="Znf_LIM"/>
</dbReference>
<dbReference type="PANTHER" id="PTHR46485">
    <property type="entry name" value="LIM DOMAIN KINASE 1"/>
    <property type="match status" value="1"/>
</dbReference>
<dbReference type="PANTHER" id="PTHR46485:SF1">
    <property type="entry name" value="LIM DOMAIN KINASE 2"/>
    <property type="match status" value="1"/>
</dbReference>
<dbReference type="Pfam" id="PF00412">
    <property type="entry name" value="LIM"/>
    <property type="match status" value="2"/>
</dbReference>
<dbReference type="Pfam" id="PF00595">
    <property type="entry name" value="PDZ"/>
    <property type="match status" value="1"/>
</dbReference>
<dbReference type="Pfam" id="PF07714">
    <property type="entry name" value="PK_Tyr_Ser-Thr"/>
    <property type="match status" value="1"/>
</dbReference>
<dbReference type="SMART" id="SM00132">
    <property type="entry name" value="LIM"/>
    <property type="match status" value="2"/>
</dbReference>
<dbReference type="SMART" id="SM00228">
    <property type="entry name" value="PDZ"/>
    <property type="match status" value="1"/>
</dbReference>
<dbReference type="SUPFAM" id="SSF57716">
    <property type="entry name" value="Glucocorticoid receptor-like (DNA-binding domain)"/>
    <property type="match status" value="2"/>
</dbReference>
<dbReference type="SUPFAM" id="SSF50156">
    <property type="entry name" value="PDZ domain-like"/>
    <property type="match status" value="1"/>
</dbReference>
<dbReference type="SUPFAM" id="SSF56112">
    <property type="entry name" value="Protein kinase-like (PK-like)"/>
    <property type="match status" value="1"/>
</dbReference>
<dbReference type="PROSITE" id="PS00478">
    <property type="entry name" value="LIM_DOMAIN_1"/>
    <property type="match status" value="2"/>
</dbReference>
<dbReference type="PROSITE" id="PS50023">
    <property type="entry name" value="LIM_DOMAIN_2"/>
    <property type="match status" value="2"/>
</dbReference>
<dbReference type="PROSITE" id="PS50106">
    <property type="entry name" value="PDZ"/>
    <property type="match status" value="1"/>
</dbReference>
<dbReference type="PROSITE" id="PS00107">
    <property type="entry name" value="PROTEIN_KINASE_ATP"/>
    <property type="match status" value="1"/>
</dbReference>
<dbReference type="PROSITE" id="PS50011">
    <property type="entry name" value="PROTEIN_KINASE_DOM"/>
    <property type="match status" value="1"/>
</dbReference>
<reference key="1">
    <citation type="journal article" date="1997" name="Biochem. Biophys. Res. Commun.">
        <title>cDNA cloning, genomic organization, and chromosomal localization of the mouse LIM motif-containing kinase gene, Limk2.</title>
        <authorList>
            <person name="Koshimizu U."/>
            <person name="Takahashi H."/>
            <person name="Yoshida M.C."/>
            <person name="Nakamura T."/>
        </authorList>
    </citation>
    <scope>NUCLEOTIDE SEQUENCE [MRNA] (LIMK2A)</scope>
    <source>
        <strain>ICR</strain>
        <tissue>Embryo</tissue>
    </source>
</reference>
<reference key="2">
    <citation type="journal article" date="1997" name="Genomics">
        <title>Mouse LIM-kinase 2 gene: cDNA cloning, genomic organization, and tissue-specific expression of two alternatively initiated transcripts.</title>
        <authorList>
            <person name="Ikebe C."/>
            <person name="Ohashi K."/>
            <person name="Fujimori T."/>
            <person name="Bernard O."/>
            <person name="Noda T."/>
            <person name="Robertson E.J."/>
            <person name="Mizuno K."/>
        </authorList>
    </citation>
    <scope>NUCLEOTIDE SEQUENCE [GENOMIC DNA / MRNA] (LIMK2A AND LIMK2B)</scope>
    <source>
        <strain>129/Sv</strain>
        <tissue>Kidney</tissue>
    </source>
</reference>
<reference key="3">
    <citation type="journal article" date="1998" name="Biochem. Biophys. Res. Commun.">
        <title>A novel transcript encoding truncated LIM kinase 2 is specifically expressed in male germ cells undergoing meiosis.</title>
        <authorList>
            <person name="Takahashi H."/>
            <person name="Koshimizu U."/>
            <person name="Nakamura T."/>
        </authorList>
    </citation>
    <scope>NUCLEOTIDE SEQUENCE [MRNA] (ISOFORM 3)</scope>
    <scope>TISSUE SPECIFICITY</scope>
    <source>
        <tissue>Testis</tissue>
    </source>
</reference>
<reference key="4">
    <citation type="journal article" date="1998" name="Biochem. Biophys. Res. Commun.">
        <title>Identification of testis-specific (LimK2t) and brain-specific (LimK2c) isoforms of mouse LIM-kinase 2 gene transcripts.</title>
        <authorList>
            <person name="Ikebe C."/>
            <person name="Ohashi K."/>
            <person name="Mizuno K."/>
        </authorList>
    </citation>
    <scope>NUCLEOTIDE SEQUENCE [MRNA] (ISOFORM 3)</scope>
    <source>
        <tissue>Testis</tissue>
    </source>
</reference>
<reference key="5">
    <citation type="journal article" date="2004" name="Genome Res.">
        <title>The status, quality, and expansion of the NIH full-length cDNA project: the Mammalian Gene Collection (MGC).</title>
        <authorList>
            <consortium name="The MGC Project Team"/>
        </authorList>
    </citation>
    <scope>NUCLEOTIDE SEQUENCE [LARGE SCALE MRNA] (LIMK2A)</scope>
    <source>
        <tissue>Mammary tumor</tissue>
    </source>
</reference>
<reference key="6">
    <citation type="journal article" date="2008" name="Mol. Cell. Biol.">
        <title>Nischarin inhibits LIM kinase to regulate cofilin phosphorylation and cell invasion.</title>
        <authorList>
            <person name="Ding Y."/>
            <person name="Milosavljevic T."/>
            <person name="Alahari S.K."/>
        </authorList>
    </citation>
    <scope>INTERACTION WITH NISCH</scope>
</reference>
<reference key="7">
    <citation type="journal article" date="2010" name="Cell">
        <title>A tissue-specific atlas of mouse protein phosphorylation and expression.</title>
        <authorList>
            <person name="Huttlin E.L."/>
            <person name="Jedrychowski M.P."/>
            <person name="Elias J.E."/>
            <person name="Goswami T."/>
            <person name="Rad R."/>
            <person name="Beausoleil S.A."/>
            <person name="Villen J."/>
            <person name="Haas W."/>
            <person name="Sowa M.E."/>
            <person name="Gygi S.P."/>
        </authorList>
    </citation>
    <scope>IDENTIFICATION BY MASS SPECTROMETRY [LARGE SCALE ANALYSIS]</scope>
    <source>
        <tissue>Pancreas</tissue>
    </source>
</reference>
<reference key="8">
    <citation type="submission" date="2008-04" db="PDB data bank">
        <title>Solution structure of the PDZ domain from mouse LIM domain kinase.</title>
        <authorList>
            <consortium name="RIKEN structural genomics initiative (RSGI)"/>
        </authorList>
    </citation>
    <scope>STRUCTURE BY NMR OF 139-246</scope>
</reference>
<comment type="function">
    <text evidence="1">Serine/threonine-protein kinase that plays an essential role in the regulation of actin filament dynamics. Acts downstream of several Rho family GTPase signal transduction pathways. Involved in astral microtubule organization and mitotic spindle orientation during early stages of mitosis by mediating phosphorylation of TPPP. Displays serine/threonine-specific phosphorylation of myelin basic protein and histone (MBP) in vitro. Suppresses ciliogenesis via multiple pathways; phosphorylation of CFL1, suppression of directional trafficking of ciliary vesicles to the ciliary base, and by facilitating YAP1 nuclear localization where it acts as a transcriptional corepressor of the TEAD4 target genes AURKA and PLK1 (By similarity).</text>
</comment>
<comment type="catalytic activity">
    <reaction evidence="1">
        <text>L-seryl-[protein] + ATP = O-phospho-L-seryl-[protein] + ADP + H(+)</text>
        <dbReference type="Rhea" id="RHEA:17989"/>
        <dbReference type="Rhea" id="RHEA-COMP:9863"/>
        <dbReference type="Rhea" id="RHEA-COMP:11604"/>
        <dbReference type="ChEBI" id="CHEBI:15378"/>
        <dbReference type="ChEBI" id="CHEBI:29999"/>
        <dbReference type="ChEBI" id="CHEBI:30616"/>
        <dbReference type="ChEBI" id="CHEBI:83421"/>
        <dbReference type="ChEBI" id="CHEBI:456216"/>
        <dbReference type="EC" id="2.7.11.1"/>
    </reaction>
    <physiologicalReaction direction="left-to-right" evidence="1">
        <dbReference type="Rhea" id="RHEA:17990"/>
    </physiologicalReaction>
</comment>
<comment type="catalytic activity">
    <reaction evidence="1">
        <text>L-threonyl-[protein] + ATP = O-phospho-L-threonyl-[protein] + ADP + H(+)</text>
        <dbReference type="Rhea" id="RHEA:46608"/>
        <dbReference type="Rhea" id="RHEA-COMP:11060"/>
        <dbReference type="Rhea" id="RHEA-COMP:11605"/>
        <dbReference type="ChEBI" id="CHEBI:15378"/>
        <dbReference type="ChEBI" id="CHEBI:30013"/>
        <dbReference type="ChEBI" id="CHEBI:30616"/>
        <dbReference type="ChEBI" id="CHEBI:61977"/>
        <dbReference type="ChEBI" id="CHEBI:456216"/>
        <dbReference type="EC" id="2.7.11.1"/>
    </reaction>
    <physiologicalReaction direction="left-to-right" evidence="1">
        <dbReference type="Rhea" id="RHEA:46609"/>
    </physiologicalReaction>
</comment>
<comment type="subunit">
    <text evidence="1 6">Binds ROCK1 and MARF1 (By similarity). Interacts with NISCH (PubMed:18332102).</text>
</comment>
<comment type="subcellular location">
    <subcellularLocation>
        <location evidence="1">Cytoplasm</location>
        <location evidence="1">Cytoskeleton</location>
        <location evidence="1">Spindle</location>
    </subcellularLocation>
    <subcellularLocation>
        <location evidence="1">Cytoplasm</location>
        <location evidence="1">Cytoskeleton</location>
        <location evidence="1">Microtubule organizing center</location>
        <location evidence="1">Centrosome</location>
    </subcellularLocation>
</comment>
<comment type="subcellular location">
    <molecule>Isoform LIMK2a</molecule>
    <subcellularLocation>
        <location evidence="1">Cytoplasm</location>
    </subcellularLocation>
    <subcellularLocation>
        <location evidence="1">Nucleus</location>
    </subcellularLocation>
</comment>
<comment type="subcellular location">
    <molecule>Isoform LIMK2b</molecule>
    <subcellularLocation>
        <location evidence="1">Cytoplasm</location>
    </subcellularLocation>
    <subcellularLocation>
        <location evidence="1">Cytoplasm</location>
        <location evidence="1">Perinuclear region</location>
    </subcellularLocation>
    <subcellularLocation>
        <location evidence="1">Nucleus</location>
    </subcellularLocation>
</comment>
<comment type="alternative products">
    <event type="alternative splicing"/>
    <isoform>
        <id>O54785-1</id>
        <name>LIMK2a</name>
        <sequence type="displayed"/>
    </isoform>
    <isoform>
        <id>O54785-2</id>
        <name>LIMK2b</name>
        <sequence type="described" ref="VSP_010350"/>
    </isoform>
    <isoform>
        <id>O54785-3</id>
        <name>3</name>
        <name>LIMK2t</name>
        <name>tLIMK2</name>
        <sequence type="described" ref="VSP_010351"/>
    </isoform>
</comment>
<comment type="tissue specificity">
    <molecule>Isoform 3</molecule>
    <text evidence="7">Specifically expressed in the testes.</text>
</comment>
<comment type="PTM">
    <text evidence="1">Phosphorylated on serine and/or threonine residues by ROCK1.</text>
</comment>
<comment type="similarity">
    <text evidence="11">Belongs to the protein kinase superfamily. TKL Ser/Thr protein kinase family.</text>
</comment>
<keyword id="KW-0002">3D-structure</keyword>
<keyword id="KW-0025">Alternative splicing</keyword>
<keyword id="KW-0067">ATP-binding</keyword>
<keyword id="KW-0963">Cytoplasm</keyword>
<keyword id="KW-0206">Cytoskeleton</keyword>
<keyword id="KW-0418">Kinase</keyword>
<keyword id="KW-0440">LIM domain</keyword>
<keyword id="KW-0479">Metal-binding</keyword>
<keyword id="KW-0547">Nucleotide-binding</keyword>
<keyword id="KW-0539">Nucleus</keyword>
<keyword id="KW-0597">Phosphoprotein</keyword>
<keyword id="KW-1185">Reference proteome</keyword>
<keyword id="KW-0677">Repeat</keyword>
<keyword id="KW-0723">Serine/threonine-protein kinase</keyword>
<keyword id="KW-0808">Transferase</keyword>
<keyword id="KW-0862">Zinc</keyword>
<sequence length="638" mass="72202">MAALAGDEAWRCRGCGTYVPLSQRLYRTANEAWHGSCFRCSECQESLTNWYYEKDGKLYCHKDYWAKFGEFCHGCSLLMTGPAMVAGEFKYHPECFACMSCKVIIEDGDAYALVQHATLYCGKCHNEVVLAPMFERLSTESVQDQLPYSVTLISMPATTECRRGFSVTVESASSNYATTVQVKEVNRMHISPNNRNAIHPGDRILEINGTPVRTLRVEEVEDAIKQTSQTLQLLIEHDPVPQRLDQLRLDARLPPHMQSTGHTLMLSTLDTKENQEGTLRRRSLRRSNSISKSPGPSSPKEPLLLSRDISRSESLRCSSSYSQQIFRPCDLIHGEVLGKGFFGQAIKVTHKATGKVMVMKELIRCDEETQKTFLTEVKVMRSLDHPNVLKFIGVLYKDKKLNLLTEYIEGGTLKDFLRSVDPFPWQQKVRFAKGISSGMAYLHSMCIIHRDLNSHNCLIKLDKTVVVADFGLSRLIVEERKRPPVEKATTKKRTLRKSDRKKRYTVVGNPYWMAPEMLNGKSYDETVDVFSFGIVLCEIIGQVYADPDCLPRTLDFGLNVKLFWEKFVPTDCPPAFFPLAAICCKLEPESRPAFSKLEDSFEALSLFLGELAIPLPAELEDLDHTVSMEYGLTRDSPP</sequence>
<organism>
    <name type="scientific">Mus musculus</name>
    <name type="common">Mouse</name>
    <dbReference type="NCBI Taxonomy" id="10090"/>
    <lineage>
        <taxon>Eukaryota</taxon>
        <taxon>Metazoa</taxon>
        <taxon>Chordata</taxon>
        <taxon>Craniata</taxon>
        <taxon>Vertebrata</taxon>
        <taxon>Euteleostomi</taxon>
        <taxon>Mammalia</taxon>
        <taxon>Eutheria</taxon>
        <taxon>Euarchontoglires</taxon>
        <taxon>Glires</taxon>
        <taxon>Rodentia</taxon>
        <taxon>Myomorpha</taxon>
        <taxon>Muroidea</taxon>
        <taxon>Muridae</taxon>
        <taxon>Murinae</taxon>
        <taxon>Mus</taxon>
        <taxon>Mus</taxon>
    </lineage>
</organism>